<accession>Q9ASP6</accession>
<accession>F4JHN3</accession>
<accession>F4JHN6</accession>
<accession>O23093</accession>
<proteinExistence type="evidence at protein level"/>
<feature type="chain" id="PRO_0000440880" description="Heterogeneous nuclear ribonucleoprotein Q">
    <location>
        <begin position="1"/>
        <end position="495"/>
    </location>
</feature>
<feature type="domain" description="RRM 1" evidence="3">
    <location>
        <begin position="116"/>
        <end position="194"/>
    </location>
</feature>
<feature type="domain" description="RRM 2" evidence="3">
    <location>
        <begin position="196"/>
        <end position="278"/>
    </location>
</feature>
<feature type="domain" description="RRM 3" evidence="3">
    <location>
        <begin position="292"/>
        <end position="368"/>
    </location>
</feature>
<feature type="region of interest" description="Disordered" evidence="4">
    <location>
        <begin position="1"/>
        <end position="101"/>
    </location>
</feature>
<feature type="region of interest" description="Disordered" evidence="4">
    <location>
        <begin position="452"/>
        <end position="495"/>
    </location>
</feature>
<feature type="compositionally biased region" description="Basic and acidic residues" evidence="4">
    <location>
        <begin position="1"/>
        <end position="10"/>
    </location>
</feature>
<feature type="compositionally biased region" description="Acidic residues" evidence="4">
    <location>
        <begin position="11"/>
        <end position="46"/>
    </location>
</feature>
<feature type="compositionally biased region" description="Acidic residues" evidence="4">
    <location>
        <begin position="67"/>
        <end position="101"/>
    </location>
</feature>
<feature type="compositionally biased region" description="Basic and acidic residues" evidence="4">
    <location>
        <begin position="478"/>
        <end position="487"/>
    </location>
</feature>
<feature type="splice variant" id="VSP_059005" description="In isoform 2.">
    <original>GKTIRCSLSETK</original>
    <variation>ASSTANCSLSLS</variation>
    <location>
        <begin position="184"/>
        <end position="195"/>
    </location>
</feature>
<feature type="splice variant" id="VSP_059006" description="In isoform 3.">
    <location>
        <begin position="223"/>
        <end position="230"/>
    </location>
</feature>
<dbReference type="EMBL" id="AF013294">
    <property type="protein sequence ID" value="AAB62861.1"/>
    <property type="status" value="ALT_SEQ"/>
    <property type="molecule type" value="Genomic_DNA"/>
</dbReference>
<dbReference type="EMBL" id="AL161472">
    <property type="protein sequence ID" value="CAB80892.1"/>
    <property type="status" value="ALT_SEQ"/>
    <property type="molecule type" value="Genomic_DNA"/>
</dbReference>
<dbReference type="EMBL" id="CP002687">
    <property type="protein sequence ID" value="AEE81940.1"/>
    <property type="molecule type" value="Genomic_DNA"/>
</dbReference>
<dbReference type="EMBL" id="CP002687">
    <property type="protein sequence ID" value="AEE81941.1"/>
    <property type="molecule type" value="Genomic_DNA"/>
</dbReference>
<dbReference type="EMBL" id="CP002687">
    <property type="protein sequence ID" value="AEE81942.2"/>
    <property type="molecule type" value="Genomic_DNA"/>
</dbReference>
<dbReference type="EMBL" id="CP002687">
    <property type="protein sequence ID" value="AEE81943.1"/>
    <property type="molecule type" value="Genomic_DNA"/>
</dbReference>
<dbReference type="EMBL" id="CP002687">
    <property type="protein sequence ID" value="ANM66433.1"/>
    <property type="molecule type" value="Genomic_DNA"/>
</dbReference>
<dbReference type="EMBL" id="CP002687">
    <property type="protein sequence ID" value="ANM66434.1"/>
    <property type="molecule type" value="Genomic_DNA"/>
</dbReference>
<dbReference type="EMBL" id="AF367357">
    <property type="protein sequence ID" value="AAK32943.1"/>
    <property type="molecule type" value="mRNA"/>
</dbReference>
<dbReference type="EMBL" id="AY113171">
    <property type="protein sequence ID" value="AAM47474.1"/>
    <property type="molecule type" value="mRNA"/>
</dbReference>
<dbReference type="EMBL" id="AK227578">
    <property type="protein sequence ID" value="BAE99571.1"/>
    <property type="molecule type" value="mRNA"/>
</dbReference>
<dbReference type="PIR" id="T01563">
    <property type="entry name" value="T01563"/>
</dbReference>
<dbReference type="RefSeq" id="NP_001031566.1">
    <molecule id="Q9ASP6-1"/>
    <property type="nucleotide sequence ID" value="NM_001036489.3"/>
</dbReference>
<dbReference type="RefSeq" id="NP_001190647.2">
    <molecule id="Q9ASP6-3"/>
    <property type="nucleotide sequence ID" value="NM_001203718.2"/>
</dbReference>
<dbReference type="RefSeq" id="NP_001190648.1">
    <molecule id="Q9ASP6-2"/>
    <property type="nucleotide sequence ID" value="NM_001203719.2"/>
</dbReference>
<dbReference type="RefSeq" id="NP_001328329.1">
    <molecule id="Q9ASP6-3"/>
    <property type="nucleotide sequence ID" value="NM_001340269.1"/>
</dbReference>
<dbReference type="RefSeq" id="NP_001328330.1">
    <molecule id="Q9ASP6-1"/>
    <property type="nucleotide sequence ID" value="NM_001340270.1"/>
</dbReference>
<dbReference type="RefSeq" id="NP_567192.1">
    <molecule id="Q9ASP6-1"/>
    <property type="nucleotide sequence ID" value="NM_116309.4"/>
</dbReference>
<dbReference type="SMR" id="Q9ASP6"/>
<dbReference type="FunCoup" id="Q9ASP6">
    <property type="interactions" value="2041"/>
</dbReference>
<dbReference type="STRING" id="3702.Q9ASP6"/>
<dbReference type="GlyGen" id="Q9ASP6">
    <property type="glycosylation" value="1 site"/>
</dbReference>
<dbReference type="iPTMnet" id="Q9ASP6"/>
<dbReference type="PaxDb" id="3702-AT4G00830.4"/>
<dbReference type="ProteomicsDB" id="230138">
    <molecule id="Q9ASP6-1"/>
</dbReference>
<dbReference type="EnsemblPlants" id="AT4G00830.1">
    <molecule id="Q9ASP6-1"/>
    <property type="protein sequence ID" value="AT4G00830.1"/>
    <property type="gene ID" value="AT4G00830"/>
</dbReference>
<dbReference type="EnsemblPlants" id="AT4G00830.2">
    <molecule id="Q9ASP6-1"/>
    <property type="protein sequence ID" value="AT4G00830.2"/>
    <property type="gene ID" value="AT4G00830"/>
</dbReference>
<dbReference type="EnsemblPlants" id="AT4G00830.3">
    <molecule id="Q9ASP6-3"/>
    <property type="protein sequence ID" value="AT4G00830.3"/>
    <property type="gene ID" value="AT4G00830"/>
</dbReference>
<dbReference type="EnsemblPlants" id="AT4G00830.4">
    <molecule id="Q9ASP6-2"/>
    <property type="protein sequence ID" value="AT4G00830.4"/>
    <property type="gene ID" value="AT4G00830"/>
</dbReference>
<dbReference type="EnsemblPlants" id="AT4G00830.5">
    <molecule id="Q9ASP6-3"/>
    <property type="protein sequence ID" value="AT4G00830.5"/>
    <property type="gene ID" value="AT4G00830"/>
</dbReference>
<dbReference type="EnsemblPlants" id="AT4G00830.6">
    <molecule id="Q9ASP6-1"/>
    <property type="protein sequence ID" value="AT4G00830.6"/>
    <property type="gene ID" value="AT4G00830"/>
</dbReference>
<dbReference type="GeneID" id="827998"/>
<dbReference type="Gramene" id="AT4G00830.1">
    <molecule id="Q9ASP6-1"/>
    <property type="protein sequence ID" value="AT4G00830.1"/>
    <property type="gene ID" value="AT4G00830"/>
</dbReference>
<dbReference type="Gramene" id="AT4G00830.2">
    <molecule id="Q9ASP6-1"/>
    <property type="protein sequence ID" value="AT4G00830.2"/>
    <property type="gene ID" value="AT4G00830"/>
</dbReference>
<dbReference type="Gramene" id="AT4G00830.3">
    <molecule id="Q9ASP6-3"/>
    <property type="protein sequence ID" value="AT4G00830.3"/>
    <property type="gene ID" value="AT4G00830"/>
</dbReference>
<dbReference type="Gramene" id="AT4G00830.4">
    <molecule id="Q9ASP6-2"/>
    <property type="protein sequence ID" value="AT4G00830.4"/>
    <property type="gene ID" value="AT4G00830"/>
</dbReference>
<dbReference type="Gramene" id="AT4G00830.5">
    <molecule id="Q9ASP6-3"/>
    <property type="protein sequence ID" value="AT4G00830.5"/>
    <property type="gene ID" value="AT4G00830"/>
</dbReference>
<dbReference type="Gramene" id="AT4G00830.6">
    <molecule id="Q9ASP6-1"/>
    <property type="protein sequence ID" value="AT4G00830.6"/>
    <property type="gene ID" value="AT4G00830"/>
</dbReference>
<dbReference type="KEGG" id="ath:AT4G00830"/>
<dbReference type="Araport" id="AT4G00830"/>
<dbReference type="TAIR" id="AT4G00830">
    <property type="gene designation" value="LIF2"/>
</dbReference>
<dbReference type="eggNOG" id="KOG0117">
    <property type="taxonomic scope" value="Eukaryota"/>
</dbReference>
<dbReference type="InParanoid" id="Q9ASP6"/>
<dbReference type="OMA" id="YPYNAGP"/>
<dbReference type="PhylomeDB" id="Q9ASP6"/>
<dbReference type="PRO" id="PR:Q9ASP6"/>
<dbReference type="Proteomes" id="UP000006548">
    <property type="component" value="Chromosome 4"/>
</dbReference>
<dbReference type="ExpressionAtlas" id="Q9ASP6">
    <property type="expression patterns" value="baseline and differential"/>
</dbReference>
<dbReference type="GO" id="GO:0005737">
    <property type="term" value="C:cytoplasm"/>
    <property type="evidence" value="ECO:0000314"/>
    <property type="project" value="UniProtKB"/>
</dbReference>
<dbReference type="GO" id="GO:0005783">
    <property type="term" value="C:endoplasmic reticulum"/>
    <property type="evidence" value="ECO:0007669"/>
    <property type="project" value="UniProtKB-KW"/>
</dbReference>
<dbReference type="GO" id="GO:0005634">
    <property type="term" value="C:nucleus"/>
    <property type="evidence" value="ECO:0000314"/>
    <property type="project" value="UniProtKB"/>
</dbReference>
<dbReference type="GO" id="GO:0003682">
    <property type="term" value="F:chromatin binding"/>
    <property type="evidence" value="ECO:0000314"/>
    <property type="project" value="UniProtKB"/>
</dbReference>
<dbReference type="GO" id="GO:0003729">
    <property type="term" value="F:mRNA binding"/>
    <property type="evidence" value="ECO:0000314"/>
    <property type="project" value="TAIR"/>
</dbReference>
<dbReference type="GO" id="GO:0043565">
    <property type="term" value="F:sequence-specific DNA binding"/>
    <property type="evidence" value="ECO:0000314"/>
    <property type="project" value="UniProtKB"/>
</dbReference>
<dbReference type="GO" id="GO:0071395">
    <property type="term" value="P:cellular response to jasmonic acid stimulus"/>
    <property type="evidence" value="ECO:0000314"/>
    <property type="project" value="UniProtKB"/>
</dbReference>
<dbReference type="GO" id="GO:0042742">
    <property type="term" value="P:defense response to bacterium"/>
    <property type="evidence" value="ECO:0000315"/>
    <property type="project" value="TAIR"/>
</dbReference>
<dbReference type="GO" id="GO:0050832">
    <property type="term" value="P:defense response to fungus"/>
    <property type="evidence" value="ECO:0000315"/>
    <property type="project" value="TAIR"/>
</dbReference>
<dbReference type="GO" id="GO:0040029">
    <property type="term" value="P:epigenetic regulation of gene expression"/>
    <property type="evidence" value="ECO:0000315"/>
    <property type="project" value="UniProtKB"/>
</dbReference>
<dbReference type="GO" id="GO:0045087">
    <property type="term" value="P:innate immune response"/>
    <property type="evidence" value="ECO:0000315"/>
    <property type="project" value="TAIR"/>
</dbReference>
<dbReference type="GO" id="GO:0045824">
    <property type="term" value="P:negative regulation of innate immune response"/>
    <property type="evidence" value="ECO:0000315"/>
    <property type="project" value="UniProtKB"/>
</dbReference>
<dbReference type="GO" id="GO:0045893">
    <property type="term" value="P:positive regulation of DNA-templated transcription"/>
    <property type="evidence" value="ECO:0000314"/>
    <property type="project" value="UniProtKB"/>
</dbReference>
<dbReference type="GO" id="GO:1905933">
    <property type="term" value="P:regulation of cell fate determination"/>
    <property type="evidence" value="ECO:0000315"/>
    <property type="project" value="UniProtKB"/>
</dbReference>
<dbReference type="GO" id="GO:0009909">
    <property type="term" value="P:regulation of flower development"/>
    <property type="evidence" value="ECO:0000315"/>
    <property type="project" value="UniProtKB"/>
</dbReference>
<dbReference type="GO" id="GO:0010468">
    <property type="term" value="P:regulation of gene expression"/>
    <property type="evidence" value="ECO:0000315"/>
    <property type="project" value="UniProtKB"/>
</dbReference>
<dbReference type="GO" id="GO:0010439">
    <property type="term" value="P:regulation of glucosinolate biosynthetic process"/>
    <property type="evidence" value="ECO:0000315"/>
    <property type="project" value="UniProtKB"/>
</dbReference>
<dbReference type="GO" id="GO:0009617">
    <property type="term" value="P:response to bacterium"/>
    <property type="evidence" value="ECO:0000270"/>
    <property type="project" value="UniProtKB"/>
</dbReference>
<dbReference type="CDD" id="cd00590">
    <property type="entry name" value="RRM_SF"/>
    <property type="match status" value="1"/>
</dbReference>
<dbReference type="FunFam" id="3.30.70.330:FF:000808">
    <property type="entry name" value="Heterogeneous nuclear ribonucleoprotein Q isoform A"/>
    <property type="match status" value="1"/>
</dbReference>
<dbReference type="FunFam" id="3.30.70.330:FF:000259">
    <property type="entry name" value="RNA-binding (RRM/RBD/RNP motifs) family protein"/>
    <property type="match status" value="1"/>
</dbReference>
<dbReference type="Gene3D" id="3.30.70.330">
    <property type="match status" value="3"/>
</dbReference>
<dbReference type="InterPro" id="IPR012677">
    <property type="entry name" value="Nucleotide-bd_a/b_plait_sf"/>
</dbReference>
<dbReference type="InterPro" id="IPR035979">
    <property type="entry name" value="RBD_domain_sf"/>
</dbReference>
<dbReference type="InterPro" id="IPR000504">
    <property type="entry name" value="RRM_dom"/>
</dbReference>
<dbReference type="InterPro" id="IPR003954">
    <property type="entry name" value="RRM_dom_euk"/>
</dbReference>
<dbReference type="PANTHER" id="PTHR21245">
    <property type="entry name" value="HETEROGENEOUS NUCLEAR RIBONUCLEOPROTEIN"/>
    <property type="match status" value="1"/>
</dbReference>
<dbReference type="Pfam" id="PF00076">
    <property type="entry name" value="RRM_1"/>
    <property type="match status" value="3"/>
</dbReference>
<dbReference type="SMART" id="SM00360">
    <property type="entry name" value="RRM"/>
    <property type="match status" value="3"/>
</dbReference>
<dbReference type="SMART" id="SM00361">
    <property type="entry name" value="RRM_1"/>
    <property type="match status" value="1"/>
</dbReference>
<dbReference type="SUPFAM" id="SSF54928">
    <property type="entry name" value="RNA-binding domain, RBD"/>
    <property type="match status" value="2"/>
</dbReference>
<dbReference type="PROSITE" id="PS50102">
    <property type="entry name" value="RRM"/>
    <property type="match status" value="3"/>
</dbReference>
<organism>
    <name type="scientific">Arabidopsis thaliana</name>
    <name type="common">Mouse-ear cress</name>
    <dbReference type="NCBI Taxonomy" id="3702"/>
    <lineage>
        <taxon>Eukaryota</taxon>
        <taxon>Viridiplantae</taxon>
        <taxon>Streptophyta</taxon>
        <taxon>Embryophyta</taxon>
        <taxon>Tracheophyta</taxon>
        <taxon>Spermatophyta</taxon>
        <taxon>Magnoliopsida</taxon>
        <taxon>eudicotyledons</taxon>
        <taxon>Gunneridae</taxon>
        <taxon>Pentapetalae</taxon>
        <taxon>rosids</taxon>
        <taxon>malvids</taxon>
        <taxon>Brassicales</taxon>
        <taxon>Brassicaceae</taxon>
        <taxon>Camelineae</taxon>
        <taxon>Arabidopsis</taxon>
    </lineage>
</organism>
<gene>
    <name evidence="8" type="primary">LIF2</name>
    <name evidence="10" type="ordered locus">At4g00830</name>
    <name evidence="11" type="ORF">A_TM018A10.14</name>
    <name evidence="11" type="ORF">T18A10.13</name>
</gene>
<comment type="function">
    <text evidence="1 5 6 7">Transcriptional activator that binds DNA on GAGA-like motif and 5'-(C/G)ACGTG(G/T)C(A/G)-3' consensus motif in the promoters of target genes (PubMed:27495811). Component of ribonucleosomes, which are complexes of at least 20 other different heterogeneous nuclear ribonucleoproteins (hnRNP). hnRNP play an important role in processing of precursor mRNA in the nucleus (By similarity). Required during flower development and for cell fate determination (PubMed:21304947). Acts both as an antagonist and as a promoter of polycomb LHP1 gene regulation activity, depending of target genes, to regulate the transcription of stress-responsive and flowering genes (PubMed:21304947, PubMed:27495811). May regulate histone H3 trimethylation on lysine 27 (H3K27me3) (PubMed:21304947). Recognizes and binds histone H3 tails methylated at 'Lys-4' (H3K4me) and acetylated at 'Lys-9' (H3K9ac), leading to epigenetic activation. When in complex with LHP1, recognizes and binds histone H3 tails methylated at 'Lys-4' (H3K4me) and 'Lys-27' (H3K27me), mostly corresponding to stress-responsive genes (PubMed:27495811). May function as a suppressor of cell-autonomous immune responses involving glucosinolates, salicylic acid (SA) and jasmonic acid (JA) pathways toward pathogenic bacteria and fungi (PubMed:24914891).</text>
</comment>
<comment type="subunit">
    <text evidence="5 7">Interacts with LHP1 in the nucleus on a common set of chromatin regions.</text>
</comment>
<comment type="subcellular location">
    <subcellularLocation>
        <location evidence="5">Nucleus</location>
    </subcellularLocation>
    <subcellularLocation>
        <location evidence="5">Cytoplasm</location>
    </subcellularLocation>
    <subcellularLocation>
        <location evidence="2">Microsome</location>
    </subcellularLocation>
    <text evidence="2">Localized in cytoplasmic mRNP granules containing untranslated mRNAs.</text>
</comment>
<comment type="alternative products">
    <event type="alternative splicing"/>
    <isoform>
        <id>Q9ASP6-1</id>
        <name>1</name>
        <sequence type="displayed"/>
    </isoform>
    <isoform>
        <id>Q9ASP6-2</id>
        <name>2</name>
        <sequence type="described" ref="VSP_059005"/>
    </isoform>
    <isoform>
        <id>Q9ASP6-3</id>
        <name>3</name>
        <sequence type="described" ref="VSP_059006"/>
    </isoform>
</comment>
<comment type="tissue specificity">
    <text evidence="5">Predominantly expressed in vascular and meristematic tissues. Expressed throughout development in seedlings, roots, leaves, floral buds and siliques.</text>
</comment>
<comment type="developmental stage">
    <text evidence="5">In young plants, expressed in the distal regions of cotyledons, throughout leaves and root apical meristem, lateral root meristems and young floral buds. Strongly detected in the vascular tissues of various organs (e.g. roots, leaves, hypocotyls, sepals, petals, anther filaments) as well as in the gynophore. In the gynoecium, mainly detected in apical and basal regions as well as in the developing ovules in these regions.</text>
</comment>
<comment type="induction">
    <text evidence="6 7">Slighty induced upon pathogen infection (e.g. P.syringae) (PubMed:24914891). Rapidly recruited to chromatin upon methyl jasmonate treatment (MeJA) to mediate transcriptional gene activation (PubMed:27495811).</text>
</comment>
<comment type="disruption phenotype">
    <text evidence="5 6">Mild early flowering phenotype, reduced rosette diameter, abnormal floral developmental homeostasis and altered gynoecium growth determination associated with indeterminate ovaries growth. Production of ectopic inflorescences with severely affected flowers showing proliferation of ectopic stigmatic papillae and ovules in short-day conditions. Repression of FLC accompanied by an increase in histone H3 trimethylation on lysine 27 (H3K27me3). Altered expression of several genes, including LHP1-regulated genes (PubMed:21304947). Basal primed defense state due to changes in the basal expression of the salicylic acid (SA)- and jasmonic acid (JA)- dependent defense marker genes PR1 and PDF1.2, and altered composition of glucosinolates, a class of defense-related secondary metabolites. Reduced susceptibility to the hemi-biotrophic bacteria pathogen P.syringae and the necrotrophic ascomycete B.cinerea (PubMed:24914891).</text>
</comment>
<comment type="sequence caution" evidence="9">
    <conflict type="erroneous gene model prediction">
        <sequence resource="EMBL-CDS" id="AAB62861"/>
    </conflict>
</comment>
<comment type="sequence caution" evidence="9">
    <conflict type="erroneous gene model prediction">
        <sequence resource="EMBL-CDS" id="CAB80892"/>
    </conflict>
</comment>
<name>HNRPQ_ARATH</name>
<protein>
    <recommendedName>
        <fullName evidence="9">Heterogeneous nuclear ribonucleoprotein Q</fullName>
        <shortName evidence="9">hnRNP Q</shortName>
    </recommendedName>
    <alternativeName>
        <fullName evidence="8">Protein LHP1-INTERACTING FACTOR 2</fullName>
    </alternativeName>
</protein>
<evidence type="ECO:0000250" key="1">
    <source>
        <dbReference type="UniProtKB" id="O60506"/>
    </source>
</evidence>
<evidence type="ECO:0000250" key="2">
    <source>
        <dbReference type="UniProtKB" id="Q7TMK9"/>
    </source>
</evidence>
<evidence type="ECO:0000255" key="3">
    <source>
        <dbReference type="PROSITE-ProRule" id="PRU00176"/>
    </source>
</evidence>
<evidence type="ECO:0000256" key="4">
    <source>
        <dbReference type="SAM" id="MobiDB-lite"/>
    </source>
</evidence>
<evidence type="ECO:0000269" key="5">
    <source>
    </source>
</evidence>
<evidence type="ECO:0000269" key="6">
    <source>
    </source>
</evidence>
<evidence type="ECO:0000269" key="7">
    <source>
    </source>
</evidence>
<evidence type="ECO:0000303" key="8">
    <source>
    </source>
</evidence>
<evidence type="ECO:0000305" key="9"/>
<evidence type="ECO:0000312" key="10">
    <source>
        <dbReference type="Araport" id="AT4G00830"/>
    </source>
</evidence>
<evidence type="ECO:0000312" key="11">
    <source>
        <dbReference type="EMBL" id="AAB62861.1"/>
    </source>
</evidence>
<keyword id="KW-0010">Activator</keyword>
<keyword id="KW-0025">Alternative splicing</keyword>
<keyword id="KW-0963">Cytoplasm</keyword>
<keyword id="KW-0217">Developmental protein</keyword>
<keyword id="KW-0256">Endoplasmic reticulum</keyword>
<keyword id="KW-0492">Microsome</keyword>
<keyword id="KW-0539">Nucleus</keyword>
<keyword id="KW-0611">Plant defense</keyword>
<keyword id="KW-1185">Reference proteome</keyword>
<keyword id="KW-0677">Repeat</keyword>
<keyword id="KW-0694">RNA-binding</keyword>
<keyword id="KW-0346">Stress response</keyword>
<keyword id="KW-0804">Transcription</keyword>
<keyword id="KW-0805">Transcription regulation</keyword>
<sequence>MSDARDNDDRVDFEEGSYSEMEDEVEEEQVEEYEEEEEEDDDDDDVGNQNAEEREVEDYGDTKGGDMEDVQEEIAEDDDNHIDIETADDDEKPPSPIDDEDREKYSHLLSLPPHGSEVFIGGLPRDVGEEDLRDLCEEIGEIFEVRLMKDRDSGDSKGYAFVAFKTKDVAQKAIEELHSKEFKGKTIRCSLSETKNRLFIGNIPKNWTEDEFRKVIEDVGPGVENIELIKDPTNTTRNRGFAFVLYYNNACADYSRQKMIDSNFKLEGNAPTVTWADPKSSPEHSAAAAQVKALYVKNIPENTSTEQLKELFQRHGEVTKIVTPPGKGGKRDFGFVHYAERSSALKAVKDTERYEVNGQPLEVVLAKPQAERKHDPSSYSYGAAPTPAPFVHPTFGGFAAAPYGAMGAGLGIAGSFSQPMIYGRGAMPTGMQMVPMLLPDGRVGYVLQQPGMPMAAAPPQRPRRNDRNNGSSGGSGRDNSHEHDGNRGGRRYRPY</sequence>
<reference key="1">
    <citation type="journal article" date="1999" name="Nature">
        <title>Sequence and analysis of chromosome 4 of the plant Arabidopsis thaliana.</title>
        <authorList>
            <person name="Mayer K.F.X."/>
            <person name="Schueller C."/>
            <person name="Wambutt R."/>
            <person name="Murphy G."/>
            <person name="Volckaert G."/>
            <person name="Pohl T."/>
            <person name="Duesterhoeft A."/>
            <person name="Stiekema W."/>
            <person name="Entian K.-D."/>
            <person name="Terryn N."/>
            <person name="Harris B."/>
            <person name="Ansorge W."/>
            <person name="Brandt P."/>
            <person name="Grivell L.A."/>
            <person name="Rieger M."/>
            <person name="Weichselgartner M."/>
            <person name="de Simone V."/>
            <person name="Obermaier B."/>
            <person name="Mache R."/>
            <person name="Mueller M."/>
            <person name="Kreis M."/>
            <person name="Delseny M."/>
            <person name="Puigdomenech P."/>
            <person name="Watson M."/>
            <person name="Schmidtheini T."/>
            <person name="Reichert B."/>
            <person name="Portetelle D."/>
            <person name="Perez-Alonso M."/>
            <person name="Boutry M."/>
            <person name="Bancroft I."/>
            <person name="Vos P."/>
            <person name="Hoheisel J."/>
            <person name="Zimmermann W."/>
            <person name="Wedler H."/>
            <person name="Ridley P."/>
            <person name="Langham S.-A."/>
            <person name="McCullagh B."/>
            <person name="Bilham L."/>
            <person name="Robben J."/>
            <person name="van der Schueren J."/>
            <person name="Grymonprez B."/>
            <person name="Chuang Y.-J."/>
            <person name="Vandenbussche F."/>
            <person name="Braeken M."/>
            <person name="Weltjens I."/>
            <person name="Voet M."/>
            <person name="Bastiaens I."/>
            <person name="Aert R."/>
            <person name="Defoor E."/>
            <person name="Weitzenegger T."/>
            <person name="Bothe G."/>
            <person name="Ramsperger U."/>
            <person name="Hilbert H."/>
            <person name="Braun M."/>
            <person name="Holzer E."/>
            <person name="Brandt A."/>
            <person name="Peters S."/>
            <person name="van Staveren M."/>
            <person name="Dirkse W."/>
            <person name="Mooijman P."/>
            <person name="Klein Lankhorst R."/>
            <person name="Rose M."/>
            <person name="Hauf J."/>
            <person name="Koetter P."/>
            <person name="Berneiser S."/>
            <person name="Hempel S."/>
            <person name="Feldpausch M."/>
            <person name="Lamberth S."/>
            <person name="Van den Daele H."/>
            <person name="De Keyser A."/>
            <person name="Buysshaert C."/>
            <person name="Gielen J."/>
            <person name="Villarroel R."/>
            <person name="De Clercq R."/>
            <person name="van Montagu M."/>
            <person name="Rogers J."/>
            <person name="Cronin A."/>
            <person name="Quail M.A."/>
            <person name="Bray-Allen S."/>
            <person name="Clark L."/>
            <person name="Doggett J."/>
            <person name="Hall S."/>
            <person name="Kay M."/>
            <person name="Lennard N."/>
            <person name="McLay K."/>
            <person name="Mayes R."/>
            <person name="Pettett A."/>
            <person name="Rajandream M.A."/>
            <person name="Lyne M."/>
            <person name="Benes V."/>
            <person name="Rechmann S."/>
            <person name="Borkova D."/>
            <person name="Bloecker H."/>
            <person name="Scharfe M."/>
            <person name="Grimm M."/>
            <person name="Loehnert T.-H."/>
            <person name="Dose S."/>
            <person name="de Haan M."/>
            <person name="Maarse A.C."/>
            <person name="Schaefer M."/>
            <person name="Mueller-Auer S."/>
            <person name="Gabel C."/>
            <person name="Fuchs M."/>
            <person name="Fartmann B."/>
            <person name="Granderath K."/>
            <person name="Dauner D."/>
            <person name="Herzl A."/>
            <person name="Neumann S."/>
            <person name="Argiriou A."/>
            <person name="Vitale D."/>
            <person name="Liguori R."/>
            <person name="Piravandi E."/>
            <person name="Massenet O."/>
            <person name="Quigley F."/>
            <person name="Clabauld G."/>
            <person name="Muendlein A."/>
            <person name="Felber R."/>
            <person name="Schnabl S."/>
            <person name="Hiller R."/>
            <person name="Schmidt W."/>
            <person name="Lecharny A."/>
            <person name="Aubourg S."/>
            <person name="Chefdor F."/>
            <person name="Cooke R."/>
            <person name="Berger C."/>
            <person name="Monfort A."/>
            <person name="Casacuberta E."/>
            <person name="Gibbons T."/>
            <person name="Weber N."/>
            <person name="Vandenbol M."/>
            <person name="Bargues M."/>
            <person name="Terol J."/>
            <person name="Torres A."/>
            <person name="Perez-Perez A."/>
            <person name="Purnelle B."/>
            <person name="Bent E."/>
            <person name="Johnson S."/>
            <person name="Tacon D."/>
            <person name="Jesse T."/>
            <person name="Heijnen L."/>
            <person name="Schwarz S."/>
            <person name="Scholler P."/>
            <person name="Heber S."/>
            <person name="Francs P."/>
            <person name="Bielke C."/>
            <person name="Frishman D."/>
            <person name="Haase D."/>
            <person name="Lemcke K."/>
            <person name="Mewes H.-W."/>
            <person name="Stocker S."/>
            <person name="Zaccaria P."/>
            <person name="Bevan M."/>
            <person name="Wilson R.K."/>
            <person name="de la Bastide M."/>
            <person name="Habermann K."/>
            <person name="Parnell L."/>
            <person name="Dedhia N."/>
            <person name="Gnoj L."/>
            <person name="Schutz K."/>
            <person name="Huang E."/>
            <person name="Spiegel L."/>
            <person name="Sekhon M."/>
            <person name="Murray J."/>
            <person name="Sheet P."/>
            <person name="Cordes M."/>
            <person name="Abu-Threideh J."/>
            <person name="Stoneking T."/>
            <person name="Kalicki J."/>
            <person name="Graves T."/>
            <person name="Harmon G."/>
            <person name="Edwards J."/>
            <person name="Latreille P."/>
            <person name="Courtney L."/>
            <person name="Cloud J."/>
            <person name="Abbott A."/>
            <person name="Scott K."/>
            <person name="Johnson D."/>
            <person name="Minx P."/>
            <person name="Bentley D."/>
            <person name="Fulton B."/>
            <person name="Miller N."/>
            <person name="Greco T."/>
            <person name="Kemp K."/>
            <person name="Kramer J."/>
            <person name="Fulton L."/>
            <person name="Mardis E."/>
            <person name="Dante M."/>
            <person name="Pepin K."/>
            <person name="Hillier L.W."/>
            <person name="Nelson J."/>
            <person name="Spieth J."/>
            <person name="Ryan E."/>
            <person name="Andrews S."/>
            <person name="Geisel C."/>
            <person name="Layman D."/>
            <person name="Du H."/>
            <person name="Ali J."/>
            <person name="Berghoff A."/>
            <person name="Jones K."/>
            <person name="Drone K."/>
            <person name="Cotton M."/>
            <person name="Joshu C."/>
            <person name="Antonoiu B."/>
            <person name="Zidanic M."/>
            <person name="Strong C."/>
            <person name="Sun H."/>
            <person name="Lamar B."/>
            <person name="Yordan C."/>
            <person name="Ma P."/>
            <person name="Zhong J."/>
            <person name="Preston R."/>
            <person name="Vil D."/>
            <person name="Shekher M."/>
            <person name="Matero A."/>
            <person name="Shah R."/>
            <person name="Swaby I.K."/>
            <person name="O'Shaughnessy A."/>
            <person name="Rodriguez M."/>
            <person name="Hoffman J."/>
            <person name="Till S."/>
            <person name="Granat S."/>
            <person name="Shohdy N."/>
            <person name="Hasegawa A."/>
            <person name="Hameed A."/>
            <person name="Lodhi M."/>
            <person name="Johnson A."/>
            <person name="Chen E."/>
            <person name="Marra M.A."/>
            <person name="Martienssen R."/>
            <person name="McCombie W.R."/>
        </authorList>
    </citation>
    <scope>NUCLEOTIDE SEQUENCE [LARGE SCALE GENOMIC DNA]</scope>
    <source>
        <strain>cv. Columbia</strain>
    </source>
</reference>
<reference key="2">
    <citation type="journal article" date="2017" name="Plant J.">
        <title>Araport11: a complete reannotation of the Arabidopsis thaliana reference genome.</title>
        <authorList>
            <person name="Cheng C.Y."/>
            <person name="Krishnakumar V."/>
            <person name="Chan A.P."/>
            <person name="Thibaud-Nissen F."/>
            <person name="Schobel S."/>
            <person name="Town C.D."/>
        </authorList>
    </citation>
    <scope>GENOME REANNOTATION</scope>
    <source>
        <strain>cv. Columbia</strain>
    </source>
</reference>
<reference key="3">
    <citation type="journal article" date="2003" name="Science">
        <title>Empirical analysis of transcriptional activity in the Arabidopsis genome.</title>
        <authorList>
            <person name="Yamada K."/>
            <person name="Lim J."/>
            <person name="Dale J.M."/>
            <person name="Chen H."/>
            <person name="Shinn P."/>
            <person name="Palm C.J."/>
            <person name="Southwick A.M."/>
            <person name="Wu H.C."/>
            <person name="Kim C.J."/>
            <person name="Nguyen M."/>
            <person name="Pham P.K."/>
            <person name="Cheuk R.F."/>
            <person name="Karlin-Newmann G."/>
            <person name="Liu S.X."/>
            <person name="Lam B."/>
            <person name="Sakano H."/>
            <person name="Wu T."/>
            <person name="Yu G."/>
            <person name="Miranda M."/>
            <person name="Quach H.L."/>
            <person name="Tripp M."/>
            <person name="Chang C.H."/>
            <person name="Lee J.M."/>
            <person name="Toriumi M.J."/>
            <person name="Chan M.M."/>
            <person name="Tang C.C."/>
            <person name="Onodera C.S."/>
            <person name="Deng J.M."/>
            <person name="Akiyama K."/>
            <person name="Ansari Y."/>
            <person name="Arakawa T."/>
            <person name="Banh J."/>
            <person name="Banno F."/>
            <person name="Bowser L."/>
            <person name="Brooks S.Y."/>
            <person name="Carninci P."/>
            <person name="Chao Q."/>
            <person name="Choy N."/>
            <person name="Enju A."/>
            <person name="Goldsmith A.D."/>
            <person name="Gurjal M."/>
            <person name="Hansen N.F."/>
            <person name="Hayashizaki Y."/>
            <person name="Johnson-Hopson C."/>
            <person name="Hsuan V.W."/>
            <person name="Iida K."/>
            <person name="Karnes M."/>
            <person name="Khan S."/>
            <person name="Koesema E."/>
            <person name="Ishida J."/>
            <person name="Jiang P.X."/>
            <person name="Jones T."/>
            <person name="Kawai J."/>
            <person name="Kamiya A."/>
            <person name="Meyers C."/>
            <person name="Nakajima M."/>
            <person name="Narusaka M."/>
            <person name="Seki M."/>
            <person name="Sakurai T."/>
            <person name="Satou M."/>
            <person name="Tamse R."/>
            <person name="Vaysberg M."/>
            <person name="Wallender E.K."/>
            <person name="Wong C."/>
            <person name="Yamamura Y."/>
            <person name="Yuan S."/>
            <person name="Shinozaki K."/>
            <person name="Davis R.W."/>
            <person name="Theologis A."/>
            <person name="Ecker J.R."/>
        </authorList>
    </citation>
    <scope>NUCLEOTIDE SEQUENCE [LARGE SCALE MRNA] (ISOFORM 1)</scope>
    <source>
        <strain>cv. Columbia</strain>
    </source>
</reference>
<reference key="4">
    <citation type="submission" date="2006-07" db="EMBL/GenBank/DDBJ databases">
        <title>Large-scale analysis of RIKEN Arabidopsis full-length (RAFL) cDNAs.</title>
        <authorList>
            <person name="Totoki Y."/>
            <person name="Seki M."/>
            <person name="Ishida J."/>
            <person name="Nakajima M."/>
            <person name="Enju A."/>
            <person name="Kamiya A."/>
            <person name="Narusaka M."/>
            <person name="Shin-i T."/>
            <person name="Nakagawa M."/>
            <person name="Sakamoto N."/>
            <person name="Oishi K."/>
            <person name="Kohara Y."/>
            <person name="Kobayashi M."/>
            <person name="Toyoda A."/>
            <person name="Sakaki Y."/>
            <person name="Sakurai T."/>
            <person name="Iida K."/>
            <person name="Akiyama K."/>
            <person name="Satou M."/>
            <person name="Toyoda T."/>
            <person name="Konagaya A."/>
            <person name="Carninci P."/>
            <person name="Kawai J."/>
            <person name="Hayashizaki Y."/>
            <person name="Shinozaki K."/>
        </authorList>
    </citation>
    <scope>NUCLEOTIDE SEQUENCE [LARGE SCALE MRNA] (ISOFORM 1)</scope>
    <source>
        <strain>cv. Columbia</strain>
    </source>
</reference>
<reference key="5">
    <citation type="journal article" date="2011" name="Mol. Cells">
        <title>Phylogenetic and expression analysis of RNA-binding proteins with triple RNA recognition motifs in plants.</title>
        <authorList>
            <person name="Peal L."/>
            <person name="Jambunathan N."/>
            <person name="Mahalingam R."/>
        </authorList>
    </citation>
    <scope>GENE FAMILY</scope>
</reference>
<reference key="6">
    <citation type="journal article" date="2011" name="PLoS ONE">
        <title>Control of flowering and cell fate by LIF2, an RNA binding partner of the polycomb complex component LHP1.</title>
        <authorList>
            <person name="Latrasse D."/>
            <person name="Germann S."/>
            <person name="Houba-Herin N."/>
            <person name="Dubois E."/>
            <person name="Bui-Prodhomme D."/>
            <person name="Hourcade D."/>
            <person name="Juul-Jensen T."/>
            <person name="Le Roux C."/>
            <person name="Majira A."/>
            <person name="Simoncello N."/>
            <person name="Granier F."/>
            <person name="Taconnat L."/>
            <person name="Renou J.P."/>
            <person name="Gaudin V."/>
        </authorList>
    </citation>
    <scope>FUNCTION</scope>
    <scope>DISRUPTION PHENOTYPE</scope>
    <scope>DEVELOPMENTAL STAGE</scope>
    <scope>TISSUE SPECIFICITY</scope>
    <scope>SUBCELLULAR LOCATION</scope>
    <scope>INTERACTION WITH LHP1</scope>
    <source>
        <strain>cv. Columbia</strain>
    </source>
</reference>
<reference key="7">
    <citation type="journal article" date="2014" name="PLoS ONE">
        <title>The hnRNP-Q protein LIF2 participates in the plant immune response.</title>
        <authorList>
            <person name="Le Roux C."/>
            <person name="Del Prete S."/>
            <person name="Boutet-Mercey S."/>
            <person name="Perreau F."/>
            <person name="Balague C."/>
            <person name="Roby D."/>
            <person name="Fagard M."/>
            <person name="Gaudin V."/>
        </authorList>
    </citation>
    <scope>FUNCTION</scope>
    <scope>DISRUPTION PHENOTYPE</scope>
    <scope>INDUCTION BY PATHOGEN INFECTION</scope>
    <source>
        <strain>cv. Columbia</strain>
    </source>
</reference>
<reference key="8">
    <citation type="journal article" date="2016" name="Plant Cell">
        <title>The Arabidopsis hnRNP-Q Protein LIF2 and the PRC1 subunit LHP1 function in concert to regulate the transcription of stress-responsive genes.</title>
        <authorList>
            <person name="Molitor A."/>
            <person name="Latrasse D."/>
            <person name="Zytnicki M."/>
            <person name="Andrey P."/>
            <person name="Houba-Herin N."/>
            <person name="Hachet M."/>
            <person name="Battail C."/>
            <person name="Del Prete S."/>
            <person name="Alberti A."/>
            <person name="Quesneville H."/>
            <person name="Gaudin V."/>
        </authorList>
    </citation>
    <scope>FUNCTION</scope>
    <scope>INDUCTION BY JASMONIC ACID</scope>
    <scope>SUBUNIT</scope>
    <source>
        <strain>cv. Columbia</strain>
    </source>
</reference>